<feature type="chain" id="PRO_1000128638" description="Small ribosomal subunit protein uS14">
    <location>
        <begin position="1"/>
        <end position="101"/>
    </location>
</feature>
<feature type="region of interest" description="Disordered" evidence="2">
    <location>
        <begin position="33"/>
        <end position="69"/>
    </location>
</feature>
<feature type="compositionally biased region" description="Basic and acidic residues" evidence="2">
    <location>
        <begin position="51"/>
        <end position="68"/>
    </location>
</feature>
<accession>Q8NL05</accession>
<name>RS14_XANAC</name>
<proteinExistence type="inferred from homology"/>
<gene>
    <name evidence="1" type="primary">rpsN</name>
    <name evidence="4" type="ordered locus">XAC0985</name>
</gene>
<sequence>MAKTSMIHRDIKRAKLAKKFAGKRDALKKILSSQDASYEEKIDASTKLQKLPRDSSPSRHRNRCELSGRPRGVYRKFGLGRNMLRKATMNGDVPGLRKASW</sequence>
<comment type="function">
    <text evidence="1">Binds 16S rRNA, required for the assembly of 30S particles and may also be responsible for determining the conformation of the 16S rRNA at the A site.</text>
</comment>
<comment type="subunit">
    <text evidence="1">Part of the 30S ribosomal subunit. Contacts proteins S3 and S10.</text>
</comment>
<comment type="similarity">
    <text evidence="1">Belongs to the universal ribosomal protein uS14 family.</text>
</comment>
<evidence type="ECO:0000255" key="1">
    <source>
        <dbReference type="HAMAP-Rule" id="MF_00537"/>
    </source>
</evidence>
<evidence type="ECO:0000256" key="2">
    <source>
        <dbReference type="SAM" id="MobiDB-lite"/>
    </source>
</evidence>
<evidence type="ECO:0000305" key="3"/>
<evidence type="ECO:0000312" key="4">
    <source>
        <dbReference type="EMBL" id="AAM35868.1"/>
    </source>
</evidence>
<organism>
    <name type="scientific">Xanthomonas axonopodis pv. citri (strain 306)</name>
    <dbReference type="NCBI Taxonomy" id="190486"/>
    <lineage>
        <taxon>Bacteria</taxon>
        <taxon>Pseudomonadati</taxon>
        <taxon>Pseudomonadota</taxon>
        <taxon>Gammaproteobacteria</taxon>
        <taxon>Lysobacterales</taxon>
        <taxon>Lysobacteraceae</taxon>
        <taxon>Xanthomonas</taxon>
    </lineage>
</organism>
<reference key="1">
    <citation type="journal article" date="2002" name="Nature">
        <title>Comparison of the genomes of two Xanthomonas pathogens with differing host specificities.</title>
        <authorList>
            <person name="da Silva A.C.R."/>
            <person name="Ferro J.A."/>
            <person name="Reinach F.C."/>
            <person name="Farah C.S."/>
            <person name="Furlan L.R."/>
            <person name="Quaggio R.B."/>
            <person name="Monteiro-Vitorello C.B."/>
            <person name="Van Sluys M.A."/>
            <person name="Almeida N.F. Jr."/>
            <person name="Alves L.M.C."/>
            <person name="do Amaral A.M."/>
            <person name="Bertolini M.C."/>
            <person name="Camargo L.E.A."/>
            <person name="Camarotte G."/>
            <person name="Cannavan F."/>
            <person name="Cardozo J."/>
            <person name="Chambergo F."/>
            <person name="Ciapina L.P."/>
            <person name="Cicarelli R.M.B."/>
            <person name="Coutinho L.L."/>
            <person name="Cursino-Santos J.R."/>
            <person name="El-Dorry H."/>
            <person name="Faria J.B."/>
            <person name="Ferreira A.J.S."/>
            <person name="Ferreira R.C.C."/>
            <person name="Ferro M.I.T."/>
            <person name="Formighieri E.F."/>
            <person name="Franco M.C."/>
            <person name="Greggio C.C."/>
            <person name="Gruber A."/>
            <person name="Katsuyama A.M."/>
            <person name="Kishi L.T."/>
            <person name="Leite R.P."/>
            <person name="Lemos E.G.M."/>
            <person name="Lemos M.V.F."/>
            <person name="Locali E.C."/>
            <person name="Machado M.A."/>
            <person name="Madeira A.M.B.N."/>
            <person name="Martinez-Rossi N.M."/>
            <person name="Martins E.C."/>
            <person name="Meidanis J."/>
            <person name="Menck C.F.M."/>
            <person name="Miyaki C.Y."/>
            <person name="Moon D.H."/>
            <person name="Moreira L.M."/>
            <person name="Novo M.T.M."/>
            <person name="Okura V.K."/>
            <person name="Oliveira M.C."/>
            <person name="Oliveira V.R."/>
            <person name="Pereira H.A."/>
            <person name="Rossi A."/>
            <person name="Sena J.A.D."/>
            <person name="Silva C."/>
            <person name="de Souza R.F."/>
            <person name="Spinola L.A.F."/>
            <person name="Takita M.A."/>
            <person name="Tamura R.E."/>
            <person name="Teixeira E.C."/>
            <person name="Tezza R.I.D."/>
            <person name="Trindade dos Santos M."/>
            <person name="Truffi D."/>
            <person name="Tsai S.M."/>
            <person name="White F.F."/>
            <person name="Setubal J.C."/>
            <person name="Kitajima J.P."/>
        </authorList>
    </citation>
    <scope>NUCLEOTIDE SEQUENCE [LARGE SCALE GENOMIC DNA]</scope>
    <source>
        <strain>306</strain>
    </source>
</reference>
<protein>
    <recommendedName>
        <fullName evidence="1">Small ribosomal subunit protein uS14</fullName>
    </recommendedName>
    <alternativeName>
        <fullName evidence="3">30S ribosomal protein S14</fullName>
    </alternativeName>
</protein>
<keyword id="KW-0687">Ribonucleoprotein</keyword>
<keyword id="KW-0689">Ribosomal protein</keyword>
<keyword id="KW-0694">RNA-binding</keyword>
<keyword id="KW-0699">rRNA-binding</keyword>
<dbReference type="EMBL" id="AE008923">
    <property type="protein sequence ID" value="AAM35868.1"/>
    <property type="molecule type" value="Genomic_DNA"/>
</dbReference>
<dbReference type="RefSeq" id="WP_005917137.1">
    <property type="nucleotide sequence ID" value="NC_003919.1"/>
</dbReference>
<dbReference type="SMR" id="Q8NL05"/>
<dbReference type="GeneID" id="97210517"/>
<dbReference type="KEGG" id="xac:XAC0985"/>
<dbReference type="eggNOG" id="COG0199">
    <property type="taxonomic scope" value="Bacteria"/>
</dbReference>
<dbReference type="HOGENOM" id="CLU_139869_0_1_6"/>
<dbReference type="Proteomes" id="UP000000576">
    <property type="component" value="Chromosome"/>
</dbReference>
<dbReference type="GO" id="GO:0005737">
    <property type="term" value="C:cytoplasm"/>
    <property type="evidence" value="ECO:0007669"/>
    <property type="project" value="UniProtKB-ARBA"/>
</dbReference>
<dbReference type="GO" id="GO:0015935">
    <property type="term" value="C:small ribosomal subunit"/>
    <property type="evidence" value="ECO:0007669"/>
    <property type="project" value="TreeGrafter"/>
</dbReference>
<dbReference type="GO" id="GO:0019843">
    <property type="term" value="F:rRNA binding"/>
    <property type="evidence" value="ECO:0007669"/>
    <property type="project" value="UniProtKB-UniRule"/>
</dbReference>
<dbReference type="GO" id="GO:0003735">
    <property type="term" value="F:structural constituent of ribosome"/>
    <property type="evidence" value="ECO:0007669"/>
    <property type="project" value="InterPro"/>
</dbReference>
<dbReference type="GO" id="GO:0006412">
    <property type="term" value="P:translation"/>
    <property type="evidence" value="ECO:0007669"/>
    <property type="project" value="UniProtKB-UniRule"/>
</dbReference>
<dbReference type="FunFam" id="1.10.287.1480:FF:000001">
    <property type="entry name" value="30S ribosomal protein S14"/>
    <property type="match status" value="1"/>
</dbReference>
<dbReference type="Gene3D" id="1.10.287.1480">
    <property type="match status" value="1"/>
</dbReference>
<dbReference type="HAMAP" id="MF_00537">
    <property type="entry name" value="Ribosomal_uS14_1"/>
    <property type="match status" value="1"/>
</dbReference>
<dbReference type="InterPro" id="IPR001209">
    <property type="entry name" value="Ribosomal_uS14"/>
</dbReference>
<dbReference type="InterPro" id="IPR023036">
    <property type="entry name" value="Ribosomal_uS14_bac/plastid"/>
</dbReference>
<dbReference type="NCBIfam" id="NF006477">
    <property type="entry name" value="PRK08881.1"/>
    <property type="match status" value="1"/>
</dbReference>
<dbReference type="PANTHER" id="PTHR19836">
    <property type="entry name" value="30S RIBOSOMAL PROTEIN S14"/>
    <property type="match status" value="1"/>
</dbReference>
<dbReference type="PANTHER" id="PTHR19836:SF19">
    <property type="entry name" value="SMALL RIBOSOMAL SUBUNIT PROTEIN US14M"/>
    <property type="match status" value="1"/>
</dbReference>
<dbReference type="Pfam" id="PF00253">
    <property type="entry name" value="Ribosomal_S14"/>
    <property type="match status" value="1"/>
</dbReference>
<dbReference type="SUPFAM" id="SSF57716">
    <property type="entry name" value="Glucocorticoid receptor-like (DNA-binding domain)"/>
    <property type="match status" value="1"/>
</dbReference>